<comment type="catalytic activity">
    <reaction>
        <text>RX + glutathione = an S-substituted glutathione + a halide anion + H(+)</text>
        <dbReference type="Rhea" id="RHEA:16437"/>
        <dbReference type="ChEBI" id="CHEBI:15378"/>
        <dbReference type="ChEBI" id="CHEBI:16042"/>
        <dbReference type="ChEBI" id="CHEBI:17792"/>
        <dbReference type="ChEBI" id="CHEBI:57925"/>
        <dbReference type="ChEBI" id="CHEBI:90779"/>
        <dbReference type="EC" id="2.5.1.18"/>
    </reaction>
</comment>
<comment type="subunit">
    <text evidence="3">Homodimer.</text>
</comment>
<comment type="subcellular location">
    <subcellularLocation>
        <location evidence="1">Cytoplasm</location>
    </subcellularLocation>
</comment>
<comment type="allergen">
    <text>Causes an allergic reaction in human.</text>
</comment>
<comment type="similarity">
    <text evidence="3">Belongs to the GST superfamily. Mu family.</text>
</comment>
<proteinExistence type="evidence at protein level"/>
<dbReference type="EC" id="2.5.1.18"/>
<dbReference type="EMBL" id="S75286">
    <property type="protein sequence ID" value="AAB32224.1"/>
    <property type="molecule type" value="mRNA"/>
</dbReference>
<dbReference type="PIR" id="S50146">
    <property type="entry name" value="S50146"/>
</dbReference>
<dbReference type="PDB" id="4Q5Q">
    <property type="method" value="X-ray"/>
    <property type="resolution" value="1.93 A"/>
    <property type="chains" value="A/B=1-219"/>
</dbReference>
<dbReference type="PDBsum" id="4Q5Q"/>
<dbReference type="SMR" id="P46419"/>
<dbReference type="FunCoup" id="P46419">
    <property type="interactions" value="242"/>
</dbReference>
<dbReference type="Allergome" id="322">
    <property type="allergen name" value="Der p 8"/>
</dbReference>
<dbReference type="Allergome" id="3269">
    <property type="allergen name" value="Der p 8.0101"/>
</dbReference>
<dbReference type="InParanoid" id="P46419"/>
<dbReference type="OrthoDB" id="4951845at2759"/>
<dbReference type="BRENDA" id="2.5.1.18">
    <property type="organism ID" value="1873"/>
</dbReference>
<dbReference type="EvolutionaryTrace" id="P46419"/>
<dbReference type="Proteomes" id="UP000515146">
    <property type="component" value="Unplaced"/>
</dbReference>
<dbReference type="GO" id="GO:0005737">
    <property type="term" value="C:cytoplasm"/>
    <property type="evidence" value="ECO:0007669"/>
    <property type="project" value="UniProtKB-SubCell"/>
</dbReference>
<dbReference type="GO" id="GO:0004364">
    <property type="term" value="F:glutathione transferase activity"/>
    <property type="evidence" value="ECO:0007669"/>
    <property type="project" value="UniProtKB-EC"/>
</dbReference>
<dbReference type="GO" id="GO:0006749">
    <property type="term" value="P:glutathione metabolic process"/>
    <property type="evidence" value="ECO:0007669"/>
    <property type="project" value="TreeGrafter"/>
</dbReference>
<dbReference type="CDD" id="cd03209">
    <property type="entry name" value="GST_C_Mu"/>
    <property type="match status" value="1"/>
</dbReference>
<dbReference type="CDD" id="cd03075">
    <property type="entry name" value="GST_N_Mu"/>
    <property type="match status" value="1"/>
</dbReference>
<dbReference type="FunFam" id="1.20.1050.10:FF:000003">
    <property type="entry name" value="Glutathione S-transferase 2"/>
    <property type="match status" value="1"/>
</dbReference>
<dbReference type="FunFam" id="3.40.30.10:FF:000019">
    <property type="entry name" value="Glutathione S-transferase Mu"/>
    <property type="match status" value="1"/>
</dbReference>
<dbReference type="Gene3D" id="1.20.1050.130">
    <property type="match status" value="1"/>
</dbReference>
<dbReference type="InterPro" id="IPR010987">
    <property type="entry name" value="Glutathione-S-Trfase_C-like"/>
</dbReference>
<dbReference type="InterPro" id="IPR036282">
    <property type="entry name" value="Glutathione-S-Trfase_C_sf"/>
</dbReference>
<dbReference type="InterPro" id="IPR004045">
    <property type="entry name" value="Glutathione_S-Trfase_N"/>
</dbReference>
<dbReference type="InterPro" id="IPR004046">
    <property type="entry name" value="GST_C"/>
</dbReference>
<dbReference type="InterPro" id="IPR003081">
    <property type="entry name" value="GST_mu"/>
</dbReference>
<dbReference type="InterPro" id="IPR050213">
    <property type="entry name" value="GST_superfamily"/>
</dbReference>
<dbReference type="InterPro" id="IPR036249">
    <property type="entry name" value="Thioredoxin-like_sf"/>
</dbReference>
<dbReference type="PANTHER" id="PTHR11571">
    <property type="entry name" value="GLUTATHIONE S-TRANSFERASE"/>
    <property type="match status" value="1"/>
</dbReference>
<dbReference type="PANTHER" id="PTHR11571:SF253">
    <property type="entry name" value="S-TRANSFERASE, PUTATIVE-RELATED"/>
    <property type="match status" value="1"/>
</dbReference>
<dbReference type="Pfam" id="PF14497">
    <property type="entry name" value="GST_C_3"/>
    <property type="match status" value="1"/>
</dbReference>
<dbReference type="Pfam" id="PF02798">
    <property type="entry name" value="GST_N"/>
    <property type="match status" value="1"/>
</dbReference>
<dbReference type="PRINTS" id="PR01267">
    <property type="entry name" value="GSTRNSFRASEM"/>
</dbReference>
<dbReference type="SFLD" id="SFLDG01205">
    <property type="entry name" value="AMPS.1"/>
    <property type="match status" value="1"/>
</dbReference>
<dbReference type="SFLD" id="SFLDG00363">
    <property type="entry name" value="AMPS_(cytGST):_Alpha-__Mu-__Pi"/>
    <property type="match status" value="1"/>
</dbReference>
<dbReference type="SUPFAM" id="SSF47616">
    <property type="entry name" value="GST C-terminal domain-like"/>
    <property type="match status" value="1"/>
</dbReference>
<dbReference type="SUPFAM" id="SSF52833">
    <property type="entry name" value="Thioredoxin-like"/>
    <property type="match status" value="1"/>
</dbReference>
<dbReference type="PROSITE" id="PS50405">
    <property type="entry name" value="GST_CTER"/>
    <property type="match status" value="1"/>
</dbReference>
<dbReference type="PROSITE" id="PS50404">
    <property type="entry name" value="GST_NTER"/>
    <property type="match status" value="1"/>
</dbReference>
<reference key="1">
    <citation type="journal article" date="1994" name="Biochim. Biophys. Acta">
        <title>Cloning and characterization of a major allergen of the house dust mite, Dermatophagoides pteronyssinus, homologous with glutathione S-transferase.</title>
        <authorList>
            <person name="O'Neill G.M."/>
            <person name="Donovan G.R."/>
            <person name="Baldo B.A."/>
        </authorList>
    </citation>
    <scope>NUCLEOTIDE SEQUENCE [MRNA]</scope>
</reference>
<feature type="chain" id="PRO_0000185839" description="Glutathione S-transferase">
    <location>
        <begin position="1"/>
        <end position="219"/>
    </location>
</feature>
<feature type="domain" description="GST N-terminal">
    <location>
        <begin position="2"/>
        <end position="89"/>
    </location>
</feature>
<feature type="domain" description="GST C-terminal">
    <location>
        <begin position="91"/>
        <end position="207"/>
    </location>
</feature>
<feature type="binding site" evidence="2">
    <location>
        <begin position="8"/>
        <end position="9"/>
    </location>
    <ligand>
        <name>glutathione</name>
        <dbReference type="ChEBI" id="CHEBI:57925"/>
    </ligand>
</feature>
<feature type="binding site" evidence="2">
    <location>
        <begin position="44"/>
        <end position="47"/>
    </location>
    <ligand>
        <name>glutathione</name>
        <dbReference type="ChEBI" id="CHEBI:57925"/>
    </ligand>
</feature>
<feature type="binding site" evidence="2">
    <location>
        <position position="51"/>
    </location>
    <ligand>
        <name>glutathione</name>
        <dbReference type="ChEBI" id="CHEBI:57925"/>
    </ligand>
</feature>
<feature type="binding site" evidence="2">
    <location>
        <begin position="60"/>
        <end position="61"/>
    </location>
    <ligand>
        <name>glutathione</name>
        <dbReference type="ChEBI" id="CHEBI:57925"/>
    </ligand>
</feature>
<feature type="binding site" evidence="2">
    <location>
        <begin position="73"/>
        <end position="74"/>
    </location>
    <ligand>
        <name>glutathione</name>
        <dbReference type="ChEBI" id="CHEBI:57925"/>
    </ligand>
</feature>
<feature type="binding site" evidence="1">
    <location>
        <position position="117"/>
    </location>
    <ligand>
        <name>substrate</name>
    </ligand>
</feature>
<feature type="strand" evidence="4">
    <location>
        <begin position="5"/>
        <end position="12"/>
    </location>
</feature>
<feature type="turn" evidence="4">
    <location>
        <begin position="13"/>
        <end position="15"/>
    </location>
</feature>
<feature type="helix" evidence="4">
    <location>
        <begin position="16"/>
        <end position="25"/>
    </location>
</feature>
<feature type="strand" evidence="4">
    <location>
        <begin position="30"/>
        <end position="34"/>
    </location>
</feature>
<feature type="turn" evidence="4">
    <location>
        <begin position="39"/>
        <end position="41"/>
    </location>
</feature>
<feature type="helix" evidence="4">
    <location>
        <begin position="45"/>
        <end position="48"/>
    </location>
</feature>
<feature type="turn" evidence="4">
    <location>
        <begin position="49"/>
        <end position="52"/>
    </location>
</feature>
<feature type="strand" evidence="4">
    <location>
        <begin position="61"/>
        <end position="66"/>
    </location>
</feature>
<feature type="strand" evidence="4">
    <location>
        <begin position="69"/>
        <end position="73"/>
    </location>
</feature>
<feature type="helix" evidence="4">
    <location>
        <begin position="74"/>
        <end position="84"/>
    </location>
</feature>
<feature type="helix" evidence="4">
    <location>
        <begin position="92"/>
        <end position="116"/>
    </location>
</feature>
<feature type="helix" evidence="4">
    <location>
        <begin position="121"/>
        <end position="143"/>
    </location>
</feature>
<feature type="strand" evidence="4">
    <location>
        <begin position="151"/>
        <end position="153"/>
    </location>
</feature>
<feature type="helix" evidence="4">
    <location>
        <begin position="157"/>
        <end position="171"/>
    </location>
</feature>
<feature type="helix" evidence="4">
    <location>
        <begin position="173"/>
        <end position="176"/>
    </location>
</feature>
<feature type="helix" evidence="4">
    <location>
        <begin position="180"/>
        <end position="190"/>
    </location>
</feature>
<feature type="helix" evidence="4">
    <location>
        <begin position="195"/>
        <end position="201"/>
    </location>
</feature>
<feature type="strand" evidence="4">
    <location>
        <begin position="205"/>
        <end position="208"/>
    </location>
</feature>
<organism>
    <name type="scientific">Dermatophagoides pteronyssinus</name>
    <name type="common">European house dust mite</name>
    <dbReference type="NCBI Taxonomy" id="6956"/>
    <lineage>
        <taxon>Eukaryota</taxon>
        <taxon>Metazoa</taxon>
        <taxon>Ecdysozoa</taxon>
        <taxon>Arthropoda</taxon>
        <taxon>Chelicerata</taxon>
        <taxon>Arachnida</taxon>
        <taxon>Acari</taxon>
        <taxon>Acariformes</taxon>
        <taxon>Sarcoptiformes</taxon>
        <taxon>Astigmata</taxon>
        <taxon>Psoroptidia</taxon>
        <taxon>Analgoidea</taxon>
        <taxon>Pyroglyphidae</taxon>
        <taxon>Dermatophagoidinae</taxon>
        <taxon>Dermatophagoides</taxon>
    </lineage>
</organism>
<name>GSTM1_DERPT</name>
<protein>
    <recommendedName>
        <fullName>Glutathione S-transferase</fullName>
        <ecNumber>2.5.1.18</ecNumber>
    </recommendedName>
    <alternativeName>
        <fullName>GST class-mu</fullName>
    </alternativeName>
    <alternativeName>
        <fullName>Major allergen Der p 8</fullName>
    </alternativeName>
    <alternativeName>
        <fullName>P dp 15</fullName>
    </alternativeName>
    <allergenName>Der p 8</allergenName>
</protein>
<keyword id="KW-0002">3D-structure</keyword>
<keyword id="KW-0020">Allergen</keyword>
<keyword id="KW-0963">Cytoplasm</keyword>
<keyword id="KW-1185">Reference proteome</keyword>
<keyword id="KW-0808">Transferase</keyword>
<evidence type="ECO:0000250" key="1"/>
<evidence type="ECO:0000250" key="2">
    <source>
        <dbReference type="UniProtKB" id="P09488"/>
    </source>
</evidence>
<evidence type="ECO:0000305" key="3"/>
<evidence type="ECO:0007829" key="4">
    <source>
        <dbReference type="PDB" id="4Q5Q"/>
    </source>
</evidence>
<accession>P46419</accession>
<sequence length="219" mass="25590">MSQPILGYWDIRGYAQPIRLLLTYSGVDFVDKRYQIGPAPDFDRSEWLNEKFNLGLDFPNLPYYIDGDMKMTQTFAILRYLGRKYKLNGSNDHEEIRISMAEQQTEDMMAAMIRVCYDANCDKLKPDYLKSLPDCLKLMSKFVGEHAFIAGANISYVDFNLYEYLCHVKVMVPEVFGQFENLKRYVERMESLPRVSDYIKKQQPKTFNAPTSKWNASYA</sequence>